<evidence type="ECO:0000305" key="1"/>
<evidence type="ECO:0000305" key="2">
    <source>
    </source>
</evidence>
<evidence type="ECO:0000312" key="3">
    <source>
        <dbReference type="EMBL" id="BAW85698.1"/>
    </source>
</evidence>
<sequence length="888" mass="97382">METEGLTLDWNAHLPTVEVAYGLTKNSLKMWKSGTTATSDDYWLYTDGTVWNGVGVLGNNPETSTGFEKITPNFNASIKTYSASATDGQTDFNIPFTFSTITVFVNGSIQLPGLNYTVSGSTLTFTTELEAGDLLYVFIGNPNISTNDKLNRIYTANAMQGQTTIQVPYDFSTAIVYINGVLQNPITAYSIGADRIITFSEELYQDDEIIIMLGDIIIQSDEYVLKQELLDVNASSYINTKSGNSIQEEFDILYNSNSISKIIYSDIKNINWDEINEIFVCGKTLNTTEGAGYFYYDNNDTITVEDGGTCFVINNKRIKRRYIGPALSSWFTTIDGINTFLSTGNVSLRFDSNLTLTKALTIKSNTNLYFNKDVFLFPSGPTIQGLICSGSVSTTITTTLTSDVSSSSFIVNVTDASKFSVGDYVEIRSEKLVEGVNAQGVKIGIMRQITKIDANQLYIDKIALYDFTISDNTLISKMDIVKNVNIDGLTFNNINYTTLFPITMNMVYCDNIVIKNTQLYGSKEKYTGDVSGRTALKINSCRNVLIENCNAYHQGWYGVEILGYSEEVTVDKCFFDDCRHGVSINWSSIYGEPNGILINDCTSTSSTLSGFDTHDIGRNITFSNCRAYKSGDDGFQIRARNVKYINCLADYSTLDGFGQGDGAINTRLIGCKATNNGRNGFSLVWEGGNIEDCEALNNQYGYAMLGGRIINSRGIDNSSACVDCGSNSDPANQFSLYIDNCDFPYSTIQTRCLYFRGSSGIRPELVSVKNTNMAGYGNLWYLLGGYSSQPLSPMLNNNTLDINSTTAPTSGMVTLTAGTATINTSAVKLSTSSTASTLRYVSNIDLKRILSSSNIGTLSISNIVNGVSFTITSSNNLDASTIYWQISL</sequence>
<feature type="chain" id="PRO_0000458694" description="Depolymerase, capsule K1-specific">
    <location>
        <begin position="1"/>
        <end position="888"/>
    </location>
</feature>
<dbReference type="EMBL" id="AB897757">
    <property type="protein sequence ID" value="BAQ02841.1"/>
    <property type="molecule type" value="Genomic_DNA"/>
</dbReference>
<dbReference type="EMBL" id="LC121104">
    <property type="protein sequence ID" value="BAW85698.1"/>
    <property type="molecule type" value="Genomic_DNA"/>
</dbReference>
<dbReference type="RefSeq" id="YP_009153201.1">
    <property type="nucleotide sequence ID" value="NC_027399.1"/>
</dbReference>
<dbReference type="SMR" id="A0A0A8J8T2"/>
<dbReference type="OrthoDB" id="711at10239"/>
<dbReference type="Proteomes" id="UP000202478">
    <property type="component" value="Genome"/>
</dbReference>
<dbReference type="GO" id="GO:0098015">
    <property type="term" value="C:virus tail"/>
    <property type="evidence" value="ECO:0007669"/>
    <property type="project" value="UniProtKB-KW"/>
</dbReference>
<dbReference type="GO" id="GO:0016829">
    <property type="term" value="F:lyase activity"/>
    <property type="evidence" value="ECO:0007669"/>
    <property type="project" value="UniProtKB-KW"/>
</dbReference>
<dbReference type="GO" id="GO:0098671">
    <property type="term" value="P:adhesion receptor-mediated virion attachment to host cell"/>
    <property type="evidence" value="ECO:0007669"/>
    <property type="project" value="UniProtKB-KW"/>
</dbReference>
<dbReference type="GO" id="GO:0098994">
    <property type="term" value="P:symbiont entry into host cell via disruption of host cell envelope"/>
    <property type="evidence" value="ECO:0007669"/>
    <property type="project" value="UniProtKB-KW"/>
</dbReference>
<dbReference type="GO" id="GO:0098996">
    <property type="term" value="P:symbiont entry into host cell via disruption of host cell glycocalyx"/>
    <property type="evidence" value="ECO:0007669"/>
    <property type="project" value="UniProtKB-KW"/>
</dbReference>
<dbReference type="Gene3D" id="2.160.20.10">
    <property type="entry name" value="Single-stranded right-handed beta-helix, Pectin lyase-like"/>
    <property type="match status" value="2"/>
</dbReference>
<dbReference type="InterPro" id="IPR039448">
    <property type="entry name" value="Beta_helix"/>
</dbReference>
<dbReference type="InterPro" id="IPR056204">
    <property type="entry name" value="K1-lyase_C"/>
</dbReference>
<dbReference type="InterPro" id="IPR006626">
    <property type="entry name" value="PbH1"/>
</dbReference>
<dbReference type="InterPro" id="IPR012334">
    <property type="entry name" value="Pectin_lyas_fold"/>
</dbReference>
<dbReference type="InterPro" id="IPR011050">
    <property type="entry name" value="Pectin_lyase_fold/virulence"/>
</dbReference>
<dbReference type="Pfam" id="PF13229">
    <property type="entry name" value="Beta_helix"/>
    <property type="match status" value="1"/>
</dbReference>
<dbReference type="Pfam" id="PF24146">
    <property type="entry name" value="K1-lyase_C"/>
    <property type="match status" value="1"/>
</dbReference>
<dbReference type="Pfam" id="PF24149">
    <property type="entry name" value="K1-lyase_Rider"/>
    <property type="match status" value="1"/>
</dbReference>
<dbReference type="SMART" id="SM00710">
    <property type="entry name" value="PbH1"/>
    <property type="match status" value="7"/>
</dbReference>
<dbReference type="SUPFAM" id="SSF51126">
    <property type="entry name" value="Pectin lyase-like"/>
    <property type="match status" value="2"/>
</dbReference>
<comment type="function">
    <text evidence="2">Functions as a receptor binding protein (RBP) and probably mediates the attachment to the host capsular exopolysaccharides (Probable). Displays a lyase activity that specifically degrades the K1-type polysaccharides of Klebsiella pneumoniae capsule (Probable).</text>
</comment>
<comment type="subcellular location">
    <subcellularLocation>
        <location evidence="1">Virion</location>
    </subcellularLocation>
    <text evidence="1">Tail appendage.</text>
</comment>
<comment type="similarity">
    <text evidence="1">Belongs to the K1-specific depolymerase family.</text>
</comment>
<name>DPO24_BPK64</name>
<protein>
    <recommendedName>
        <fullName evidence="1">Depolymerase, capsule K1-specific</fullName>
    </recommendedName>
    <alternativeName>
        <fullName evidence="1">Probable tail fiber protein</fullName>
    </alternativeName>
</protein>
<gene>
    <name evidence="3" type="primary">S2-4</name>
</gene>
<organismHost>
    <name type="scientific">Klebsiella</name>
    <dbReference type="NCBI Taxonomy" id="570"/>
</organismHost>
<organism>
    <name type="scientific">Klebsiella phage K64-1</name>
    <name type="common">Bacteriophage K64-1</name>
    <dbReference type="NCBI Taxonomy" id="1439894"/>
    <lineage>
        <taxon>Viruses</taxon>
        <taxon>Duplodnaviria</taxon>
        <taxon>Heunggongvirae</taxon>
        <taxon>Uroviricota</taxon>
        <taxon>Caudoviricetes</taxon>
        <taxon>Alcyoneusvirus</taxon>
        <taxon>Alcyoneusvirus K641</taxon>
    </lineage>
</organism>
<proteinExistence type="inferred from homology"/>
<reference key="1">
    <citation type="journal article" date="2014" name="Antimicrob. Agents Chemother.">
        <title>Identification of capsular types in carbapenem-resistant Klebsiella pneumoniae strains by wzc sequencing and implications in capsule depolymerase treatment.</title>
        <authorList>
            <person name="Pan Y.-J."/>
            <person name="Lin T.-L."/>
            <person name="Lin Y.-T."/>
            <person name="Su P.-A."/>
            <person name="Chen C.-T."/>
            <person name="Hsieh P.-F."/>
            <person name="Hsu C.-R."/>
            <person name="Chen C.-C."/>
            <person name="Hsieh Y.-C."/>
            <person name="Wang J.-T."/>
        </authorList>
    </citation>
    <scope>NUCLEOTIDE SEQUENCE [LARGE SCALE GENOMIC DNA]</scope>
</reference>
<reference key="2">
    <citation type="journal article" date="2017" name="J. Virol.">
        <title>Klebsiella Phage PhiK64-1 Encodes Multiple Depolymerases for Multiple Host Capsular Types.</title>
        <authorList>
            <person name="Pan Y.-J."/>
            <person name="Lin T.-L."/>
            <person name="Chen C.-C."/>
            <person name="Tsai Y.-T."/>
            <person name="Cheng Y.-H."/>
            <person name="Chen Y.-Y."/>
            <person name="Hsieh P.-F."/>
            <person name="Lin Y.-T."/>
            <person name="Wang J.-T."/>
        </authorList>
    </citation>
    <scope>NUCLEOTIDE SEQUENCE [GENOMIC DNA]</scope>
    <scope>FUNCTION</scope>
</reference>
<reference key="3">
    <citation type="journal article" date="2019" name="Front. Microbiol.">
        <title>Modeling the Architecture of Depolymerase-Containing Receptor Binding Proteins in Klebsiella Phages.</title>
        <authorList>
            <person name="Latka A."/>
            <person name="Leiman P.G."/>
            <person name="Drulis-Kawa Z."/>
            <person name="Briers Y."/>
        </authorList>
    </citation>
    <scope>REVIEW</scope>
</reference>
<accession>A0A0A8J8T2</accession>
<keyword id="KW-1238">Degradation of host capsule during virus entry</keyword>
<keyword id="KW-1235">Degradation of host cell envelope components during virus entry</keyword>
<keyword id="KW-0945">Host-virus interaction</keyword>
<keyword id="KW-0456">Lyase</keyword>
<keyword id="KW-1185">Reference proteome</keyword>
<keyword id="KW-1233">Viral attachment to host adhesion receptor</keyword>
<keyword id="KW-1161">Viral attachment to host cell</keyword>
<keyword id="KW-1227">Viral tail protein</keyword>
<keyword id="KW-0946">Virion</keyword>
<keyword id="KW-1160">Virus entry into host cell</keyword>